<accession>Q1BRA8</accession>
<reference key="1">
    <citation type="submission" date="2006-05" db="EMBL/GenBank/DDBJ databases">
        <title>Complete sequence of chromosome 1 of Burkholderia cenocepacia AU 1054.</title>
        <authorList>
            <consortium name="US DOE Joint Genome Institute"/>
            <person name="Copeland A."/>
            <person name="Lucas S."/>
            <person name="Lapidus A."/>
            <person name="Barry K."/>
            <person name="Detter J.C."/>
            <person name="Glavina del Rio T."/>
            <person name="Hammon N."/>
            <person name="Israni S."/>
            <person name="Dalin E."/>
            <person name="Tice H."/>
            <person name="Pitluck S."/>
            <person name="Chain P."/>
            <person name="Malfatti S."/>
            <person name="Shin M."/>
            <person name="Vergez L."/>
            <person name="Schmutz J."/>
            <person name="Larimer F."/>
            <person name="Land M."/>
            <person name="Hauser L."/>
            <person name="Kyrpides N."/>
            <person name="Lykidis A."/>
            <person name="LiPuma J.J."/>
            <person name="Konstantinidis K."/>
            <person name="Tiedje J.M."/>
            <person name="Richardson P."/>
        </authorList>
    </citation>
    <scope>NUCLEOTIDE SEQUENCE [LARGE SCALE GENOMIC DNA]</scope>
    <source>
        <strain>AU 1054</strain>
    </source>
</reference>
<gene>
    <name evidence="1" type="primary">atpA</name>
    <name type="ordered locus">Bcen_2951</name>
</gene>
<organism>
    <name type="scientific">Burkholderia orbicola (strain AU 1054)</name>
    <dbReference type="NCBI Taxonomy" id="331271"/>
    <lineage>
        <taxon>Bacteria</taxon>
        <taxon>Pseudomonadati</taxon>
        <taxon>Pseudomonadota</taxon>
        <taxon>Betaproteobacteria</taxon>
        <taxon>Burkholderiales</taxon>
        <taxon>Burkholderiaceae</taxon>
        <taxon>Burkholderia</taxon>
        <taxon>Burkholderia cepacia complex</taxon>
        <taxon>Burkholderia orbicola</taxon>
    </lineage>
</organism>
<keyword id="KW-0066">ATP synthesis</keyword>
<keyword id="KW-0067">ATP-binding</keyword>
<keyword id="KW-0997">Cell inner membrane</keyword>
<keyword id="KW-1003">Cell membrane</keyword>
<keyword id="KW-0139">CF(1)</keyword>
<keyword id="KW-0375">Hydrogen ion transport</keyword>
<keyword id="KW-0406">Ion transport</keyword>
<keyword id="KW-0472">Membrane</keyword>
<keyword id="KW-0547">Nucleotide-binding</keyword>
<keyword id="KW-1278">Translocase</keyword>
<keyword id="KW-0813">Transport</keyword>
<protein>
    <recommendedName>
        <fullName evidence="1">ATP synthase subunit alpha</fullName>
        <ecNumber evidence="1">7.1.2.2</ecNumber>
    </recommendedName>
    <alternativeName>
        <fullName evidence="1">ATP synthase F1 sector subunit alpha</fullName>
    </alternativeName>
    <alternativeName>
        <fullName evidence="1">F-ATPase subunit alpha</fullName>
    </alternativeName>
</protein>
<dbReference type="EC" id="7.1.2.2" evidence="1"/>
<dbReference type="EMBL" id="CP000378">
    <property type="protein sequence ID" value="ABF77847.1"/>
    <property type="molecule type" value="Genomic_DNA"/>
</dbReference>
<dbReference type="SMR" id="Q1BRA8"/>
<dbReference type="HOGENOM" id="CLU_010091_2_1_4"/>
<dbReference type="GO" id="GO:0005886">
    <property type="term" value="C:plasma membrane"/>
    <property type="evidence" value="ECO:0007669"/>
    <property type="project" value="UniProtKB-SubCell"/>
</dbReference>
<dbReference type="GO" id="GO:0045259">
    <property type="term" value="C:proton-transporting ATP synthase complex"/>
    <property type="evidence" value="ECO:0007669"/>
    <property type="project" value="UniProtKB-KW"/>
</dbReference>
<dbReference type="GO" id="GO:0043531">
    <property type="term" value="F:ADP binding"/>
    <property type="evidence" value="ECO:0007669"/>
    <property type="project" value="TreeGrafter"/>
</dbReference>
<dbReference type="GO" id="GO:0005524">
    <property type="term" value="F:ATP binding"/>
    <property type="evidence" value="ECO:0007669"/>
    <property type="project" value="UniProtKB-UniRule"/>
</dbReference>
<dbReference type="GO" id="GO:0046933">
    <property type="term" value="F:proton-transporting ATP synthase activity, rotational mechanism"/>
    <property type="evidence" value="ECO:0007669"/>
    <property type="project" value="UniProtKB-UniRule"/>
</dbReference>
<dbReference type="CDD" id="cd18113">
    <property type="entry name" value="ATP-synt_F1_alpha_C"/>
    <property type="match status" value="1"/>
</dbReference>
<dbReference type="CDD" id="cd18116">
    <property type="entry name" value="ATP-synt_F1_alpha_N"/>
    <property type="match status" value="1"/>
</dbReference>
<dbReference type="CDD" id="cd01132">
    <property type="entry name" value="F1-ATPase_alpha_CD"/>
    <property type="match status" value="1"/>
</dbReference>
<dbReference type="FunFam" id="1.20.150.20:FF:000001">
    <property type="entry name" value="ATP synthase subunit alpha"/>
    <property type="match status" value="1"/>
</dbReference>
<dbReference type="FunFam" id="2.40.30.20:FF:000001">
    <property type="entry name" value="ATP synthase subunit alpha"/>
    <property type="match status" value="1"/>
</dbReference>
<dbReference type="FunFam" id="3.40.50.300:FF:000002">
    <property type="entry name" value="ATP synthase subunit alpha"/>
    <property type="match status" value="1"/>
</dbReference>
<dbReference type="Gene3D" id="2.40.30.20">
    <property type="match status" value="1"/>
</dbReference>
<dbReference type="Gene3D" id="1.20.150.20">
    <property type="entry name" value="ATP synthase alpha/beta chain, C-terminal domain"/>
    <property type="match status" value="1"/>
</dbReference>
<dbReference type="Gene3D" id="3.40.50.300">
    <property type="entry name" value="P-loop containing nucleotide triphosphate hydrolases"/>
    <property type="match status" value="1"/>
</dbReference>
<dbReference type="HAMAP" id="MF_01346">
    <property type="entry name" value="ATP_synth_alpha_bact"/>
    <property type="match status" value="1"/>
</dbReference>
<dbReference type="InterPro" id="IPR023366">
    <property type="entry name" value="ATP_synth_asu-like_sf"/>
</dbReference>
<dbReference type="InterPro" id="IPR000793">
    <property type="entry name" value="ATP_synth_asu_C"/>
</dbReference>
<dbReference type="InterPro" id="IPR038376">
    <property type="entry name" value="ATP_synth_asu_C_sf"/>
</dbReference>
<dbReference type="InterPro" id="IPR033732">
    <property type="entry name" value="ATP_synth_F1_a_nt-bd_dom"/>
</dbReference>
<dbReference type="InterPro" id="IPR005294">
    <property type="entry name" value="ATP_synth_F1_asu"/>
</dbReference>
<dbReference type="InterPro" id="IPR020003">
    <property type="entry name" value="ATPase_a/bsu_AS"/>
</dbReference>
<dbReference type="InterPro" id="IPR004100">
    <property type="entry name" value="ATPase_F1/V1/A1_a/bsu_N"/>
</dbReference>
<dbReference type="InterPro" id="IPR036121">
    <property type="entry name" value="ATPase_F1/V1/A1_a/bsu_N_sf"/>
</dbReference>
<dbReference type="InterPro" id="IPR000194">
    <property type="entry name" value="ATPase_F1/V1/A1_a/bsu_nucl-bd"/>
</dbReference>
<dbReference type="InterPro" id="IPR027417">
    <property type="entry name" value="P-loop_NTPase"/>
</dbReference>
<dbReference type="NCBIfam" id="TIGR00962">
    <property type="entry name" value="atpA"/>
    <property type="match status" value="1"/>
</dbReference>
<dbReference type="NCBIfam" id="NF009884">
    <property type="entry name" value="PRK13343.1"/>
    <property type="match status" value="1"/>
</dbReference>
<dbReference type="PANTHER" id="PTHR48082">
    <property type="entry name" value="ATP SYNTHASE SUBUNIT ALPHA, MITOCHONDRIAL"/>
    <property type="match status" value="1"/>
</dbReference>
<dbReference type="PANTHER" id="PTHR48082:SF2">
    <property type="entry name" value="ATP SYNTHASE SUBUNIT ALPHA, MITOCHONDRIAL"/>
    <property type="match status" value="1"/>
</dbReference>
<dbReference type="Pfam" id="PF00006">
    <property type="entry name" value="ATP-synt_ab"/>
    <property type="match status" value="1"/>
</dbReference>
<dbReference type="Pfam" id="PF00306">
    <property type="entry name" value="ATP-synt_ab_C"/>
    <property type="match status" value="1"/>
</dbReference>
<dbReference type="Pfam" id="PF02874">
    <property type="entry name" value="ATP-synt_ab_N"/>
    <property type="match status" value="1"/>
</dbReference>
<dbReference type="PIRSF" id="PIRSF039088">
    <property type="entry name" value="F_ATPase_subunit_alpha"/>
    <property type="match status" value="1"/>
</dbReference>
<dbReference type="SUPFAM" id="SSF47917">
    <property type="entry name" value="C-terminal domain of alpha and beta subunits of F1 ATP synthase"/>
    <property type="match status" value="1"/>
</dbReference>
<dbReference type="SUPFAM" id="SSF50615">
    <property type="entry name" value="N-terminal domain of alpha and beta subunits of F1 ATP synthase"/>
    <property type="match status" value="1"/>
</dbReference>
<dbReference type="SUPFAM" id="SSF52540">
    <property type="entry name" value="P-loop containing nucleoside triphosphate hydrolases"/>
    <property type="match status" value="1"/>
</dbReference>
<dbReference type="PROSITE" id="PS00152">
    <property type="entry name" value="ATPASE_ALPHA_BETA"/>
    <property type="match status" value="1"/>
</dbReference>
<sequence>MQLNPSEISELIKSRIQGLEASADVRNQGTVISVTDGIVRIHGLSDVMQGEMLEFPGNTFGLALNLERDSVGAVILGEYEHISEGDIVKTTGRILEVPVGPELVGRVVDALGNPIDGKGPVNAKLTDAIEKIAPGVIWRKSVSQPVQTGIKSIDAMVPIGRGQRELIIGDRQCGKTAVALDAIINQKGKDLICIYVAIGQKASSIMNVVRKLEETGAMEYTIVVAASASDSAAMQYLAPYAGCTMGEYFRDRGQDALIIYDDLTKQAWAYRQISLLLRRPPGREAYPGDVFYLHSRLLERAARVSEEYVEKFTNGEVKGKSGSLTALPVIETQAGDVTAFVPTNVISITDGQIFLETDLFNAGIRPAINAGVSVSRVGGAAQTKVVKKLSGGIRTDLAQYRELAAFAQFASDLDEATRKQLERGRRVTELLKQPQYQPLQVWELAVSLYAANNGYLDDLDVKQVLPFEKGLRDNLKTSHADLIKRIEDTKDLSKDDEGALRSAIEAFKKSGAY</sequence>
<name>ATPA_BURO1</name>
<comment type="function">
    <text evidence="1">Produces ATP from ADP in the presence of a proton gradient across the membrane. The alpha chain is a regulatory subunit.</text>
</comment>
<comment type="catalytic activity">
    <reaction evidence="1">
        <text>ATP + H2O + 4 H(+)(in) = ADP + phosphate + 5 H(+)(out)</text>
        <dbReference type="Rhea" id="RHEA:57720"/>
        <dbReference type="ChEBI" id="CHEBI:15377"/>
        <dbReference type="ChEBI" id="CHEBI:15378"/>
        <dbReference type="ChEBI" id="CHEBI:30616"/>
        <dbReference type="ChEBI" id="CHEBI:43474"/>
        <dbReference type="ChEBI" id="CHEBI:456216"/>
        <dbReference type="EC" id="7.1.2.2"/>
    </reaction>
</comment>
<comment type="subunit">
    <text evidence="1">F-type ATPases have 2 components, CF(1) - the catalytic core - and CF(0) - the membrane proton channel. CF(1) has five subunits: alpha(3), beta(3), gamma(1), delta(1), epsilon(1). CF(0) has three main subunits: a(1), b(2) and c(9-12). The alpha and beta chains form an alternating ring which encloses part of the gamma chain. CF(1) is attached to CF(0) by a central stalk formed by the gamma and epsilon chains, while a peripheral stalk is formed by the delta and b chains.</text>
</comment>
<comment type="subcellular location">
    <subcellularLocation>
        <location evidence="1">Cell inner membrane</location>
        <topology evidence="1">Peripheral membrane protein</topology>
    </subcellularLocation>
</comment>
<comment type="similarity">
    <text evidence="1">Belongs to the ATPase alpha/beta chains family.</text>
</comment>
<feature type="chain" id="PRO_0000256082" description="ATP synthase subunit alpha">
    <location>
        <begin position="1"/>
        <end position="513"/>
    </location>
</feature>
<feature type="binding site" evidence="1">
    <location>
        <begin position="169"/>
        <end position="176"/>
    </location>
    <ligand>
        <name>ATP</name>
        <dbReference type="ChEBI" id="CHEBI:30616"/>
    </ligand>
</feature>
<feature type="site" description="Required for activity" evidence="1">
    <location>
        <position position="373"/>
    </location>
</feature>
<proteinExistence type="inferred from homology"/>
<evidence type="ECO:0000255" key="1">
    <source>
        <dbReference type="HAMAP-Rule" id="MF_01346"/>
    </source>
</evidence>